<evidence type="ECO:0000255" key="1">
    <source>
        <dbReference type="HAMAP-Rule" id="MF_01930"/>
    </source>
</evidence>
<evidence type="ECO:0000305" key="2"/>
<feature type="chain" id="PRO_0000074942" description="Phosphoribosylglycinamide formyltransferase">
    <location>
        <begin position="1"/>
        <end position="195"/>
    </location>
</feature>
<feature type="active site" description="Proton donor" evidence="1">
    <location>
        <position position="109"/>
    </location>
</feature>
<feature type="binding site" evidence="1">
    <location>
        <begin position="12"/>
        <end position="14"/>
    </location>
    <ligand>
        <name>N(1)-(5-phospho-beta-D-ribosyl)glycinamide</name>
        <dbReference type="ChEBI" id="CHEBI:143788"/>
    </ligand>
</feature>
<feature type="binding site" evidence="1">
    <location>
        <position position="65"/>
    </location>
    <ligand>
        <name>(6R)-10-formyltetrahydrofolate</name>
        <dbReference type="ChEBI" id="CHEBI:195366"/>
    </ligand>
</feature>
<feature type="binding site" evidence="1">
    <location>
        <begin position="90"/>
        <end position="93"/>
    </location>
    <ligand>
        <name>(6R)-10-formyltetrahydrofolate</name>
        <dbReference type="ChEBI" id="CHEBI:195366"/>
    </ligand>
</feature>
<feature type="binding site" evidence="1">
    <location>
        <position position="107"/>
    </location>
    <ligand>
        <name>(6R)-10-formyltetrahydrofolate</name>
        <dbReference type="ChEBI" id="CHEBI:195366"/>
    </ligand>
</feature>
<feature type="site" description="Raises pKa of active site His" evidence="1">
    <location>
        <position position="145"/>
    </location>
</feature>
<feature type="sequence conflict" description="In Ref. 1; AAA22682." evidence="2" ref="1">
    <original>A</original>
    <variation>R</variation>
    <location>
        <position position="31"/>
    </location>
</feature>
<feature type="sequence conflict" description="In Ref. 1; AAA22682." evidence="2" ref="1">
    <original>A</original>
    <variation>R</variation>
    <location>
        <position position="49"/>
    </location>
</feature>
<reference key="1">
    <citation type="journal article" date="1987" name="J. Biol. Chem.">
        <title>Cloning and characterization of a 12-gene cluster from Bacillus subtilis encoding nine enzymes for de novo purine nucleotide synthesis.</title>
        <authorList>
            <person name="Ebbole D.J."/>
            <person name="Zalkin H."/>
        </authorList>
    </citation>
    <scope>NUCLEOTIDE SEQUENCE [GENOMIC DNA]</scope>
</reference>
<reference key="2">
    <citation type="journal article" date="1997" name="Nature">
        <title>The complete genome sequence of the Gram-positive bacterium Bacillus subtilis.</title>
        <authorList>
            <person name="Kunst F."/>
            <person name="Ogasawara N."/>
            <person name="Moszer I."/>
            <person name="Albertini A.M."/>
            <person name="Alloni G."/>
            <person name="Azevedo V."/>
            <person name="Bertero M.G."/>
            <person name="Bessieres P."/>
            <person name="Bolotin A."/>
            <person name="Borchert S."/>
            <person name="Borriss R."/>
            <person name="Boursier L."/>
            <person name="Brans A."/>
            <person name="Braun M."/>
            <person name="Brignell S.C."/>
            <person name="Bron S."/>
            <person name="Brouillet S."/>
            <person name="Bruschi C.V."/>
            <person name="Caldwell B."/>
            <person name="Capuano V."/>
            <person name="Carter N.M."/>
            <person name="Choi S.-K."/>
            <person name="Codani J.-J."/>
            <person name="Connerton I.F."/>
            <person name="Cummings N.J."/>
            <person name="Daniel R.A."/>
            <person name="Denizot F."/>
            <person name="Devine K.M."/>
            <person name="Duesterhoeft A."/>
            <person name="Ehrlich S.D."/>
            <person name="Emmerson P.T."/>
            <person name="Entian K.-D."/>
            <person name="Errington J."/>
            <person name="Fabret C."/>
            <person name="Ferrari E."/>
            <person name="Foulger D."/>
            <person name="Fritz C."/>
            <person name="Fujita M."/>
            <person name="Fujita Y."/>
            <person name="Fuma S."/>
            <person name="Galizzi A."/>
            <person name="Galleron N."/>
            <person name="Ghim S.-Y."/>
            <person name="Glaser P."/>
            <person name="Goffeau A."/>
            <person name="Golightly E.J."/>
            <person name="Grandi G."/>
            <person name="Guiseppi G."/>
            <person name="Guy B.J."/>
            <person name="Haga K."/>
            <person name="Haiech J."/>
            <person name="Harwood C.R."/>
            <person name="Henaut A."/>
            <person name="Hilbert H."/>
            <person name="Holsappel S."/>
            <person name="Hosono S."/>
            <person name="Hullo M.-F."/>
            <person name="Itaya M."/>
            <person name="Jones L.-M."/>
            <person name="Joris B."/>
            <person name="Karamata D."/>
            <person name="Kasahara Y."/>
            <person name="Klaerr-Blanchard M."/>
            <person name="Klein C."/>
            <person name="Kobayashi Y."/>
            <person name="Koetter P."/>
            <person name="Koningstein G."/>
            <person name="Krogh S."/>
            <person name="Kumano M."/>
            <person name="Kurita K."/>
            <person name="Lapidus A."/>
            <person name="Lardinois S."/>
            <person name="Lauber J."/>
            <person name="Lazarevic V."/>
            <person name="Lee S.-M."/>
            <person name="Levine A."/>
            <person name="Liu H."/>
            <person name="Masuda S."/>
            <person name="Mauel C."/>
            <person name="Medigue C."/>
            <person name="Medina N."/>
            <person name="Mellado R.P."/>
            <person name="Mizuno M."/>
            <person name="Moestl D."/>
            <person name="Nakai S."/>
            <person name="Noback M."/>
            <person name="Noone D."/>
            <person name="O'Reilly M."/>
            <person name="Ogawa K."/>
            <person name="Ogiwara A."/>
            <person name="Oudega B."/>
            <person name="Park S.-H."/>
            <person name="Parro V."/>
            <person name="Pohl T.M."/>
            <person name="Portetelle D."/>
            <person name="Porwollik S."/>
            <person name="Prescott A.M."/>
            <person name="Presecan E."/>
            <person name="Pujic P."/>
            <person name="Purnelle B."/>
            <person name="Rapoport G."/>
            <person name="Rey M."/>
            <person name="Reynolds S."/>
            <person name="Rieger M."/>
            <person name="Rivolta C."/>
            <person name="Rocha E."/>
            <person name="Roche B."/>
            <person name="Rose M."/>
            <person name="Sadaie Y."/>
            <person name="Sato T."/>
            <person name="Scanlan E."/>
            <person name="Schleich S."/>
            <person name="Schroeter R."/>
            <person name="Scoffone F."/>
            <person name="Sekiguchi J."/>
            <person name="Sekowska A."/>
            <person name="Seror S.J."/>
            <person name="Serror P."/>
            <person name="Shin B.-S."/>
            <person name="Soldo B."/>
            <person name="Sorokin A."/>
            <person name="Tacconi E."/>
            <person name="Takagi T."/>
            <person name="Takahashi H."/>
            <person name="Takemaru K."/>
            <person name="Takeuchi M."/>
            <person name="Tamakoshi A."/>
            <person name="Tanaka T."/>
            <person name="Terpstra P."/>
            <person name="Tognoni A."/>
            <person name="Tosato V."/>
            <person name="Uchiyama S."/>
            <person name="Vandenbol M."/>
            <person name="Vannier F."/>
            <person name="Vassarotti A."/>
            <person name="Viari A."/>
            <person name="Wambutt R."/>
            <person name="Wedler E."/>
            <person name="Wedler H."/>
            <person name="Weitzenegger T."/>
            <person name="Winters P."/>
            <person name="Wipat A."/>
            <person name="Yamamoto H."/>
            <person name="Yamane K."/>
            <person name="Yasumoto K."/>
            <person name="Yata K."/>
            <person name="Yoshida K."/>
            <person name="Yoshikawa H.-F."/>
            <person name="Zumstein E."/>
            <person name="Yoshikawa H."/>
            <person name="Danchin A."/>
        </authorList>
    </citation>
    <scope>NUCLEOTIDE SEQUENCE [LARGE SCALE GENOMIC DNA]</scope>
    <source>
        <strain>168</strain>
    </source>
</reference>
<reference key="3">
    <citation type="journal article" date="2009" name="Microbiology">
        <title>From a consortium sequence to a unified sequence: the Bacillus subtilis 168 reference genome a decade later.</title>
        <authorList>
            <person name="Barbe V."/>
            <person name="Cruveiller S."/>
            <person name="Kunst F."/>
            <person name="Lenoble P."/>
            <person name="Meurice G."/>
            <person name="Sekowska A."/>
            <person name="Vallenet D."/>
            <person name="Wang T."/>
            <person name="Moszer I."/>
            <person name="Medigue C."/>
            <person name="Danchin A."/>
        </authorList>
    </citation>
    <scope>SEQUENCE REVISION TO 31 AND 49</scope>
</reference>
<name>PUR3_BACSU</name>
<comment type="function">
    <text evidence="1">Catalyzes the transfer of a formyl group from 10-formyltetrahydrofolate to 5-phospho-ribosyl-glycinamide (GAR), producing 5-phospho-ribosyl-N-formylglycinamide (FGAR) and tetrahydrofolate.</text>
</comment>
<comment type="catalytic activity">
    <reaction evidence="1">
        <text>N(1)-(5-phospho-beta-D-ribosyl)glycinamide + (6R)-10-formyltetrahydrofolate = N(2)-formyl-N(1)-(5-phospho-beta-D-ribosyl)glycinamide + (6S)-5,6,7,8-tetrahydrofolate + H(+)</text>
        <dbReference type="Rhea" id="RHEA:15053"/>
        <dbReference type="ChEBI" id="CHEBI:15378"/>
        <dbReference type="ChEBI" id="CHEBI:57453"/>
        <dbReference type="ChEBI" id="CHEBI:143788"/>
        <dbReference type="ChEBI" id="CHEBI:147286"/>
        <dbReference type="ChEBI" id="CHEBI:195366"/>
        <dbReference type="EC" id="2.1.2.2"/>
    </reaction>
</comment>
<comment type="pathway">
    <text evidence="1">Purine metabolism; IMP biosynthesis via de novo pathway; N(2)-formyl-N(1)-(5-phospho-D-ribosyl)glycinamide from N(1)-(5-phospho-D-ribosyl)glycinamide (10-formyl THF route): step 1/1.</text>
</comment>
<comment type="similarity">
    <text evidence="1">Belongs to the GART family.</text>
</comment>
<gene>
    <name evidence="1" type="primary">purN</name>
    <name type="ordered locus">BSU06510</name>
</gene>
<protein>
    <recommendedName>
        <fullName evidence="1">Phosphoribosylglycinamide formyltransferase</fullName>
        <ecNumber evidence="1">2.1.2.2</ecNumber>
    </recommendedName>
    <alternativeName>
        <fullName evidence="1">5'-phosphoribosylglycinamide transformylase</fullName>
    </alternativeName>
    <alternativeName>
        <fullName evidence="1">GAR transformylase</fullName>
        <shortName evidence="1">GART</shortName>
    </alternativeName>
</protein>
<keyword id="KW-0658">Purine biosynthesis</keyword>
<keyword id="KW-1185">Reference proteome</keyword>
<keyword id="KW-0808">Transferase</keyword>
<accession>P12040</accession>
<proteinExistence type="inferred from homology"/>
<dbReference type="EC" id="2.1.2.2" evidence="1"/>
<dbReference type="EMBL" id="J02732">
    <property type="protein sequence ID" value="AAA22682.1"/>
    <property type="molecule type" value="Genomic_DNA"/>
</dbReference>
<dbReference type="EMBL" id="AL009126">
    <property type="protein sequence ID" value="CAB12471.2"/>
    <property type="molecule type" value="Genomic_DNA"/>
</dbReference>
<dbReference type="PIR" id="I29326">
    <property type="entry name" value="XYBSGF"/>
</dbReference>
<dbReference type="RefSeq" id="NP_388533.2">
    <property type="nucleotide sequence ID" value="NC_000964.3"/>
</dbReference>
<dbReference type="RefSeq" id="WP_003244322.1">
    <property type="nucleotide sequence ID" value="NZ_OZ025638.1"/>
</dbReference>
<dbReference type="SMR" id="P12040"/>
<dbReference type="FunCoup" id="P12040">
    <property type="interactions" value="675"/>
</dbReference>
<dbReference type="STRING" id="224308.BSU06510"/>
<dbReference type="PaxDb" id="224308-BSU06510"/>
<dbReference type="EnsemblBacteria" id="CAB12471">
    <property type="protein sequence ID" value="CAB12471"/>
    <property type="gene ID" value="BSU_06510"/>
</dbReference>
<dbReference type="GeneID" id="936045"/>
<dbReference type="KEGG" id="bsu:BSU06510"/>
<dbReference type="PATRIC" id="fig|224308.179.peg.707"/>
<dbReference type="eggNOG" id="COG0299">
    <property type="taxonomic scope" value="Bacteria"/>
</dbReference>
<dbReference type="InParanoid" id="P12040"/>
<dbReference type="OrthoDB" id="9806170at2"/>
<dbReference type="PhylomeDB" id="P12040"/>
<dbReference type="BioCyc" id="BSUB:BSU06510-MONOMER"/>
<dbReference type="BRENDA" id="2.1.2.2">
    <property type="organism ID" value="658"/>
</dbReference>
<dbReference type="UniPathway" id="UPA00074">
    <property type="reaction ID" value="UER00126"/>
</dbReference>
<dbReference type="Proteomes" id="UP000001570">
    <property type="component" value="Chromosome"/>
</dbReference>
<dbReference type="GO" id="GO:0005737">
    <property type="term" value="C:cytoplasm"/>
    <property type="evidence" value="ECO:0000318"/>
    <property type="project" value="GO_Central"/>
</dbReference>
<dbReference type="GO" id="GO:0005829">
    <property type="term" value="C:cytosol"/>
    <property type="evidence" value="ECO:0000318"/>
    <property type="project" value="GO_Central"/>
</dbReference>
<dbReference type="GO" id="GO:0004644">
    <property type="term" value="F:phosphoribosylglycinamide formyltransferase activity"/>
    <property type="evidence" value="ECO:0000318"/>
    <property type="project" value="GO_Central"/>
</dbReference>
<dbReference type="GO" id="GO:0006189">
    <property type="term" value="P:'de novo' IMP biosynthetic process"/>
    <property type="evidence" value="ECO:0000318"/>
    <property type="project" value="GO_Central"/>
</dbReference>
<dbReference type="CDD" id="cd08645">
    <property type="entry name" value="FMT_core_GART"/>
    <property type="match status" value="1"/>
</dbReference>
<dbReference type="FunFam" id="3.40.50.170:FF:000007">
    <property type="entry name" value="Phosphoribosylglycinamide formyltransferase"/>
    <property type="match status" value="1"/>
</dbReference>
<dbReference type="Gene3D" id="3.40.50.170">
    <property type="entry name" value="Formyl transferase, N-terminal domain"/>
    <property type="match status" value="1"/>
</dbReference>
<dbReference type="HAMAP" id="MF_01930">
    <property type="entry name" value="PurN"/>
    <property type="match status" value="1"/>
</dbReference>
<dbReference type="InterPro" id="IPR002376">
    <property type="entry name" value="Formyl_transf_N"/>
</dbReference>
<dbReference type="InterPro" id="IPR036477">
    <property type="entry name" value="Formyl_transf_N_sf"/>
</dbReference>
<dbReference type="InterPro" id="IPR004607">
    <property type="entry name" value="GART"/>
</dbReference>
<dbReference type="InterPro" id="IPR001555">
    <property type="entry name" value="GART_AS"/>
</dbReference>
<dbReference type="NCBIfam" id="TIGR00639">
    <property type="entry name" value="PurN"/>
    <property type="match status" value="1"/>
</dbReference>
<dbReference type="PANTHER" id="PTHR43369">
    <property type="entry name" value="PHOSPHORIBOSYLGLYCINAMIDE FORMYLTRANSFERASE"/>
    <property type="match status" value="1"/>
</dbReference>
<dbReference type="PANTHER" id="PTHR43369:SF2">
    <property type="entry name" value="PHOSPHORIBOSYLGLYCINAMIDE FORMYLTRANSFERASE"/>
    <property type="match status" value="1"/>
</dbReference>
<dbReference type="Pfam" id="PF00551">
    <property type="entry name" value="Formyl_trans_N"/>
    <property type="match status" value="1"/>
</dbReference>
<dbReference type="SUPFAM" id="SSF53328">
    <property type="entry name" value="Formyltransferase"/>
    <property type="match status" value="1"/>
</dbReference>
<dbReference type="PROSITE" id="PS00373">
    <property type="entry name" value="GART"/>
    <property type="match status" value="1"/>
</dbReference>
<organism>
    <name type="scientific">Bacillus subtilis (strain 168)</name>
    <dbReference type="NCBI Taxonomy" id="224308"/>
    <lineage>
        <taxon>Bacteria</taxon>
        <taxon>Bacillati</taxon>
        <taxon>Bacillota</taxon>
        <taxon>Bacilli</taxon>
        <taxon>Bacillales</taxon>
        <taxon>Bacillaceae</taxon>
        <taxon>Bacillus</taxon>
    </lineage>
</organism>
<sequence length="195" mass="21606">MKKFAVFASGNGSNFEAIVTRLKEENWDASAALLVCDKPQAKVIERAEAFHIPSFAFEPKSYENKAAFEQAIIEQLRLHEVELIALAGYMRLIGDTLLQAYGGKIINIHPSLLPAFPGIDAVGQAFRAGVKVAGITVHYVDEGMDTGPIIAQKAIEIDEHDTLETIEQRIHKLEHKWYPSVIKQLLGLNNRGEKA</sequence>